<proteinExistence type="evidence at protein level"/>
<protein>
    <recommendedName>
        <fullName>Uncharacterized protein C8orf74</fullName>
    </recommendedName>
</protein>
<gene>
    <name type="primary">C8orf74</name>
</gene>
<dbReference type="EMBL" id="AC105001">
    <property type="status" value="NOT_ANNOTATED_CDS"/>
    <property type="molecule type" value="Genomic_DNA"/>
</dbReference>
<dbReference type="EMBL" id="CH471157">
    <property type="protein sequence ID" value="EAW65593.1"/>
    <property type="molecule type" value="Genomic_DNA"/>
</dbReference>
<dbReference type="EMBL" id="BC065837">
    <property type="protein sequence ID" value="AAH65837.1"/>
    <property type="status" value="ALT_INIT"/>
    <property type="molecule type" value="mRNA"/>
</dbReference>
<dbReference type="EMBL" id="BC132852">
    <property type="protein sequence ID" value="AAI32853.1"/>
    <property type="molecule type" value="mRNA"/>
</dbReference>
<dbReference type="EMBL" id="BC132854">
    <property type="protein sequence ID" value="AAI32855.1"/>
    <property type="molecule type" value="mRNA"/>
</dbReference>
<dbReference type="CCDS" id="CCDS47800.1"/>
<dbReference type="RefSeq" id="NP_001035121.2">
    <property type="nucleotide sequence ID" value="NM_001040032.2"/>
</dbReference>
<dbReference type="SMR" id="Q6P047"/>
<dbReference type="BioGRID" id="128447">
    <property type="interactions" value="12"/>
</dbReference>
<dbReference type="FunCoup" id="Q6P047">
    <property type="interactions" value="10"/>
</dbReference>
<dbReference type="IntAct" id="Q6P047">
    <property type="interactions" value="10"/>
</dbReference>
<dbReference type="MINT" id="Q6P047"/>
<dbReference type="STRING" id="9606.ENSP00000307129"/>
<dbReference type="iPTMnet" id="Q6P047"/>
<dbReference type="PhosphoSitePlus" id="Q6P047"/>
<dbReference type="BioMuta" id="C8orf74"/>
<dbReference type="DMDM" id="296439406"/>
<dbReference type="jPOST" id="Q6P047"/>
<dbReference type="MassIVE" id="Q6P047"/>
<dbReference type="PaxDb" id="9606-ENSP00000307129"/>
<dbReference type="PeptideAtlas" id="Q6P047"/>
<dbReference type="ProteomicsDB" id="66801"/>
<dbReference type="Antibodypedia" id="22088">
    <property type="antibodies" value="71 antibodies from 13 providers"/>
</dbReference>
<dbReference type="DNASU" id="203076"/>
<dbReference type="Ensembl" id="ENST00000304519.10">
    <property type="protein sequence ID" value="ENSP00000307129.5"/>
    <property type="gene ID" value="ENSG00000171060.11"/>
</dbReference>
<dbReference type="GeneID" id="203076"/>
<dbReference type="KEGG" id="hsa:203076"/>
<dbReference type="MANE-Select" id="ENST00000304519.10">
    <property type="protein sequence ID" value="ENSP00000307129.5"/>
    <property type="RefSeq nucleotide sequence ID" value="NM_001040032.2"/>
    <property type="RefSeq protein sequence ID" value="NP_001035121.2"/>
</dbReference>
<dbReference type="UCSC" id="uc003wtd.1">
    <property type="organism name" value="human"/>
</dbReference>
<dbReference type="AGR" id="HGNC:32296"/>
<dbReference type="CTD" id="203076"/>
<dbReference type="DisGeNET" id="203076"/>
<dbReference type="GeneCards" id="C8orf74"/>
<dbReference type="HGNC" id="HGNC:32296">
    <property type="gene designation" value="C8orf74"/>
</dbReference>
<dbReference type="HPA" id="ENSG00000171060">
    <property type="expression patterns" value="Tissue enriched (testis)"/>
</dbReference>
<dbReference type="neXtProt" id="NX_Q6P047"/>
<dbReference type="OpenTargets" id="ENSG00000171060"/>
<dbReference type="PharmGKB" id="PA142672337"/>
<dbReference type="VEuPathDB" id="HostDB:ENSG00000171060"/>
<dbReference type="eggNOG" id="ENOG502RYV3">
    <property type="taxonomic scope" value="Eukaryota"/>
</dbReference>
<dbReference type="GeneTree" id="ENSGT00940000154323"/>
<dbReference type="HOGENOM" id="CLU_081156_0_0_1"/>
<dbReference type="InParanoid" id="Q6P047"/>
<dbReference type="OMA" id="YQFVLCR"/>
<dbReference type="OrthoDB" id="6103133at2759"/>
<dbReference type="PAN-GO" id="Q6P047">
    <property type="GO annotations" value="0 GO annotations based on evolutionary models"/>
</dbReference>
<dbReference type="PhylomeDB" id="Q6P047"/>
<dbReference type="TreeFam" id="TF343725"/>
<dbReference type="PathwayCommons" id="Q6P047"/>
<dbReference type="SignaLink" id="Q6P047"/>
<dbReference type="BioGRID-ORCS" id="203076">
    <property type="hits" value="16 hits in 1135 CRISPR screens"/>
</dbReference>
<dbReference type="ChiTaRS" id="C8orf74">
    <property type="organism name" value="human"/>
</dbReference>
<dbReference type="GenomeRNAi" id="203076"/>
<dbReference type="Pharos" id="Q6P047">
    <property type="development level" value="Tdark"/>
</dbReference>
<dbReference type="PRO" id="PR:Q6P047"/>
<dbReference type="Proteomes" id="UP000005640">
    <property type="component" value="Chromosome 8"/>
</dbReference>
<dbReference type="RNAct" id="Q6P047">
    <property type="molecule type" value="protein"/>
</dbReference>
<dbReference type="Bgee" id="ENSG00000171060">
    <property type="expression patterns" value="Expressed in left testis and 42 other cell types or tissues"/>
</dbReference>
<dbReference type="ExpressionAtlas" id="Q6P047">
    <property type="expression patterns" value="baseline and differential"/>
</dbReference>
<dbReference type="InterPro" id="IPR032727">
    <property type="entry name" value="CLAMP"/>
</dbReference>
<dbReference type="PANTHER" id="PTHR28457">
    <property type="entry name" value="COILED-COIL DOMAIN-CONTAINING PROTEIN 189"/>
    <property type="match status" value="1"/>
</dbReference>
<dbReference type="PANTHER" id="PTHR28457:SF2">
    <property type="entry name" value="SIMILAR TO 4930578I06RIK PROTEIN"/>
    <property type="match status" value="1"/>
</dbReference>
<dbReference type="Pfam" id="PF14769">
    <property type="entry name" value="CLAMP"/>
    <property type="match status" value="1"/>
</dbReference>
<reference key="1">
    <citation type="journal article" date="2006" name="Nature">
        <title>DNA sequence and analysis of human chromosome 8.</title>
        <authorList>
            <person name="Nusbaum C."/>
            <person name="Mikkelsen T.S."/>
            <person name="Zody M.C."/>
            <person name="Asakawa S."/>
            <person name="Taudien S."/>
            <person name="Garber M."/>
            <person name="Kodira C.D."/>
            <person name="Schueler M.G."/>
            <person name="Shimizu A."/>
            <person name="Whittaker C.A."/>
            <person name="Chang J.L."/>
            <person name="Cuomo C.A."/>
            <person name="Dewar K."/>
            <person name="FitzGerald M.G."/>
            <person name="Yang X."/>
            <person name="Allen N.R."/>
            <person name="Anderson S."/>
            <person name="Asakawa T."/>
            <person name="Blechschmidt K."/>
            <person name="Bloom T."/>
            <person name="Borowsky M.L."/>
            <person name="Butler J."/>
            <person name="Cook A."/>
            <person name="Corum B."/>
            <person name="DeArellano K."/>
            <person name="DeCaprio D."/>
            <person name="Dooley K.T."/>
            <person name="Dorris L. III"/>
            <person name="Engels R."/>
            <person name="Gloeckner G."/>
            <person name="Hafez N."/>
            <person name="Hagopian D.S."/>
            <person name="Hall J.L."/>
            <person name="Ishikawa S.K."/>
            <person name="Jaffe D.B."/>
            <person name="Kamat A."/>
            <person name="Kudoh J."/>
            <person name="Lehmann R."/>
            <person name="Lokitsang T."/>
            <person name="Macdonald P."/>
            <person name="Major J.E."/>
            <person name="Matthews C.D."/>
            <person name="Mauceli E."/>
            <person name="Menzel U."/>
            <person name="Mihalev A.H."/>
            <person name="Minoshima S."/>
            <person name="Murayama Y."/>
            <person name="Naylor J.W."/>
            <person name="Nicol R."/>
            <person name="Nguyen C."/>
            <person name="O'Leary S.B."/>
            <person name="O'Neill K."/>
            <person name="Parker S.C.J."/>
            <person name="Polley A."/>
            <person name="Raymond C.K."/>
            <person name="Reichwald K."/>
            <person name="Rodriguez J."/>
            <person name="Sasaki T."/>
            <person name="Schilhabel M."/>
            <person name="Siddiqui R."/>
            <person name="Smith C.L."/>
            <person name="Sneddon T.P."/>
            <person name="Talamas J.A."/>
            <person name="Tenzin P."/>
            <person name="Topham K."/>
            <person name="Venkataraman V."/>
            <person name="Wen G."/>
            <person name="Yamazaki S."/>
            <person name="Young S.K."/>
            <person name="Zeng Q."/>
            <person name="Zimmer A.R."/>
            <person name="Rosenthal A."/>
            <person name="Birren B.W."/>
            <person name="Platzer M."/>
            <person name="Shimizu N."/>
            <person name="Lander E.S."/>
        </authorList>
    </citation>
    <scope>NUCLEOTIDE SEQUENCE [LARGE SCALE GENOMIC DNA]</scope>
</reference>
<reference key="2">
    <citation type="submission" date="2005-07" db="EMBL/GenBank/DDBJ databases">
        <authorList>
            <person name="Mural R.J."/>
            <person name="Istrail S."/>
            <person name="Sutton G.G."/>
            <person name="Florea L."/>
            <person name="Halpern A.L."/>
            <person name="Mobarry C.M."/>
            <person name="Lippert R."/>
            <person name="Walenz B."/>
            <person name="Shatkay H."/>
            <person name="Dew I."/>
            <person name="Miller J.R."/>
            <person name="Flanigan M.J."/>
            <person name="Edwards N.J."/>
            <person name="Bolanos R."/>
            <person name="Fasulo D."/>
            <person name="Halldorsson B.V."/>
            <person name="Hannenhalli S."/>
            <person name="Turner R."/>
            <person name="Yooseph S."/>
            <person name="Lu F."/>
            <person name="Nusskern D.R."/>
            <person name="Shue B.C."/>
            <person name="Zheng X.H."/>
            <person name="Zhong F."/>
            <person name="Delcher A.L."/>
            <person name="Huson D.H."/>
            <person name="Kravitz S.A."/>
            <person name="Mouchard L."/>
            <person name="Reinert K."/>
            <person name="Remington K.A."/>
            <person name="Clark A.G."/>
            <person name="Waterman M.S."/>
            <person name="Eichler E.E."/>
            <person name="Adams M.D."/>
            <person name="Hunkapiller M.W."/>
            <person name="Myers E.W."/>
            <person name="Venter J.C."/>
        </authorList>
    </citation>
    <scope>NUCLEOTIDE SEQUENCE [LARGE SCALE GENOMIC DNA]</scope>
    <scope>VARIANT PHE-15</scope>
</reference>
<reference key="3">
    <citation type="journal article" date="2004" name="Genome Res.">
        <title>The status, quality, and expansion of the NIH full-length cDNA project: the Mammalian Gene Collection (MGC).</title>
        <authorList>
            <consortium name="The MGC Project Team"/>
        </authorList>
    </citation>
    <scope>NUCLEOTIDE SEQUENCE [LARGE SCALE MRNA]</scope>
    <scope>VARIANT PHE-15</scope>
    <source>
        <tissue>Testis</tissue>
    </source>
</reference>
<comment type="interaction">
    <interactant intactId="EBI-8466055">
        <id>Q6P047</id>
    </interactant>
    <interactant intactId="EBI-710124">
        <id>O60341</id>
        <label>KDM1A</label>
    </interactant>
    <organismsDiffer>false</organismsDiffer>
    <experiments>2</experiments>
</comment>
<comment type="interaction">
    <interactant intactId="EBI-8466055">
        <id>Q6P047</id>
    </interactant>
    <interactant intactId="EBI-912440">
        <id>Q96LA8</id>
        <label>PRMT6</label>
    </interactant>
    <organismsDiffer>false</organismsDiffer>
    <experiments>2</experiments>
</comment>
<comment type="interaction">
    <interactant intactId="EBI-8466055">
        <id>Q6P047</id>
    </interactant>
    <interactant intactId="EBI-349968">
        <id>O43463</id>
        <label>SUV39H1</label>
    </interactant>
    <organismsDiffer>false</organismsDiffer>
    <experiments>2</experiments>
</comment>
<comment type="interaction">
    <interactant intactId="EBI-8466055">
        <id>Q6P047</id>
    </interactant>
    <interactant intactId="EBI-625509">
        <id>Q8N720</id>
        <label>ZNF655</label>
    </interactant>
    <organismsDiffer>false</organismsDiffer>
    <experiments>3</experiments>
</comment>
<comment type="sequence caution" evidence="4">
    <conflict type="erroneous initiation">
        <sequence resource="EMBL-CDS" id="AAH65837"/>
    </conflict>
    <text>Extended N-terminus.</text>
</comment>
<accession>Q6P047</accession>
<accession>A2RUD6</accession>
<name>CH074_HUMAN</name>
<sequence length="294" mass="33735">MALLTPQGVKEVFQLQRPQGRERLRRLLNWEEFDEQRDSRRSILLDTLYESIIFAVGKGFPWVEVAQVVKFTEELLRETKGCSITEAVTILGNKLRDYRGHFNTTHLLALCDYFHHTFIRHYKLYQYVLGQDQQVDLTVAHLEVCMPPHPLPLAEGMDRDLWIHEQQVATLTEAEAQKRADVLLLKEALRLERENSLQKAFAAAAPAQPGQVLERQELESLICQAVHTQMELLQELLQRQIQNTFAILDLKLQKKTLNLNAPTPIPPPITSHAGQEEALKPQRASKGKKAKARK</sequence>
<organism>
    <name type="scientific">Homo sapiens</name>
    <name type="common">Human</name>
    <dbReference type="NCBI Taxonomy" id="9606"/>
    <lineage>
        <taxon>Eukaryota</taxon>
        <taxon>Metazoa</taxon>
        <taxon>Chordata</taxon>
        <taxon>Craniata</taxon>
        <taxon>Vertebrata</taxon>
        <taxon>Euteleostomi</taxon>
        <taxon>Mammalia</taxon>
        <taxon>Eutheria</taxon>
        <taxon>Euarchontoglires</taxon>
        <taxon>Primates</taxon>
        <taxon>Haplorrhini</taxon>
        <taxon>Catarrhini</taxon>
        <taxon>Hominidae</taxon>
        <taxon>Homo</taxon>
    </lineage>
</organism>
<evidence type="ECO:0000256" key="1">
    <source>
        <dbReference type="SAM" id="MobiDB-lite"/>
    </source>
</evidence>
<evidence type="ECO:0000269" key="2">
    <source>
    </source>
</evidence>
<evidence type="ECO:0000269" key="3">
    <source ref="2"/>
</evidence>
<evidence type="ECO:0000305" key="4"/>
<feature type="chain" id="PRO_0000270931" description="Uncharacterized protein C8orf74">
    <location>
        <begin position="1"/>
        <end position="294"/>
    </location>
</feature>
<feature type="region of interest" description="Disordered" evidence="1">
    <location>
        <begin position="259"/>
        <end position="294"/>
    </location>
</feature>
<feature type="compositionally biased region" description="Basic residues" evidence="1">
    <location>
        <begin position="283"/>
        <end position="294"/>
    </location>
</feature>
<feature type="sequence variant" id="VAR_033684" description="In dbSNP:rs11250058." evidence="2 3">
    <original>L</original>
    <variation>F</variation>
    <location>
        <position position="15"/>
    </location>
</feature>
<feature type="sequence variant" id="VAR_061596" description="In dbSNP:rs57041981.">
    <original>I</original>
    <variation>V</variation>
    <location>
        <position position="222"/>
    </location>
</feature>
<keyword id="KW-1267">Proteomics identification</keyword>
<keyword id="KW-1185">Reference proteome</keyword>